<dbReference type="EC" id="2.7.7.23" evidence="1"/>
<dbReference type="EC" id="2.3.1.157" evidence="1"/>
<dbReference type="EMBL" id="CP000781">
    <property type="protein sequence ID" value="ABS69640.1"/>
    <property type="molecule type" value="Genomic_DNA"/>
</dbReference>
<dbReference type="SMR" id="A7INP6"/>
<dbReference type="STRING" id="78245.Xaut_4419"/>
<dbReference type="KEGG" id="xau:Xaut_4419"/>
<dbReference type="eggNOG" id="COG1207">
    <property type="taxonomic scope" value="Bacteria"/>
</dbReference>
<dbReference type="HOGENOM" id="CLU_029499_15_2_5"/>
<dbReference type="OrthoDB" id="9775031at2"/>
<dbReference type="PhylomeDB" id="A7INP6"/>
<dbReference type="UniPathway" id="UPA00113">
    <property type="reaction ID" value="UER00532"/>
</dbReference>
<dbReference type="UniPathway" id="UPA00113">
    <property type="reaction ID" value="UER00533"/>
</dbReference>
<dbReference type="UniPathway" id="UPA00973"/>
<dbReference type="Proteomes" id="UP000002417">
    <property type="component" value="Chromosome"/>
</dbReference>
<dbReference type="GO" id="GO:0005737">
    <property type="term" value="C:cytoplasm"/>
    <property type="evidence" value="ECO:0007669"/>
    <property type="project" value="UniProtKB-SubCell"/>
</dbReference>
<dbReference type="GO" id="GO:0016020">
    <property type="term" value="C:membrane"/>
    <property type="evidence" value="ECO:0007669"/>
    <property type="project" value="GOC"/>
</dbReference>
<dbReference type="GO" id="GO:0019134">
    <property type="term" value="F:glucosamine-1-phosphate N-acetyltransferase activity"/>
    <property type="evidence" value="ECO:0007669"/>
    <property type="project" value="UniProtKB-UniRule"/>
</dbReference>
<dbReference type="GO" id="GO:0000287">
    <property type="term" value="F:magnesium ion binding"/>
    <property type="evidence" value="ECO:0007669"/>
    <property type="project" value="UniProtKB-UniRule"/>
</dbReference>
<dbReference type="GO" id="GO:0003977">
    <property type="term" value="F:UDP-N-acetylglucosamine diphosphorylase activity"/>
    <property type="evidence" value="ECO:0007669"/>
    <property type="project" value="UniProtKB-UniRule"/>
</dbReference>
<dbReference type="GO" id="GO:0000902">
    <property type="term" value="P:cell morphogenesis"/>
    <property type="evidence" value="ECO:0007669"/>
    <property type="project" value="UniProtKB-UniRule"/>
</dbReference>
<dbReference type="GO" id="GO:0071555">
    <property type="term" value="P:cell wall organization"/>
    <property type="evidence" value="ECO:0007669"/>
    <property type="project" value="UniProtKB-KW"/>
</dbReference>
<dbReference type="GO" id="GO:0009245">
    <property type="term" value="P:lipid A biosynthetic process"/>
    <property type="evidence" value="ECO:0007669"/>
    <property type="project" value="UniProtKB-UniRule"/>
</dbReference>
<dbReference type="GO" id="GO:0009252">
    <property type="term" value="P:peptidoglycan biosynthetic process"/>
    <property type="evidence" value="ECO:0007669"/>
    <property type="project" value="UniProtKB-UniRule"/>
</dbReference>
<dbReference type="GO" id="GO:0008360">
    <property type="term" value="P:regulation of cell shape"/>
    <property type="evidence" value="ECO:0007669"/>
    <property type="project" value="UniProtKB-KW"/>
</dbReference>
<dbReference type="GO" id="GO:0006048">
    <property type="term" value="P:UDP-N-acetylglucosamine biosynthetic process"/>
    <property type="evidence" value="ECO:0007669"/>
    <property type="project" value="UniProtKB-UniPathway"/>
</dbReference>
<dbReference type="CDD" id="cd02540">
    <property type="entry name" value="GT2_GlmU_N_bac"/>
    <property type="match status" value="1"/>
</dbReference>
<dbReference type="CDD" id="cd03353">
    <property type="entry name" value="LbH_GlmU_C"/>
    <property type="match status" value="1"/>
</dbReference>
<dbReference type="Gene3D" id="2.160.10.10">
    <property type="entry name" value="Hexapeptide repeat proteins"/>
    <property type="match status" value="1"/>
</dbReference>
<dbReference type="Gene3D" id="3.90.550.10">
    <property type="entry name" value="Spore Coat Polysaccharide Biosynthesis Protein SpsA, Chain A"/>
    <property type="match status" value="1"/>
</dbReference>
<dbReference type="HAMAP" id="MF_01631">
    <property type="entry name" value="GlmU"/>
    <property type="match status" value="1"/>
</dbReference>
<dbReference type="InterPro" id="IPR005882">
    <property type="entry name" value="Bifunctional_GlmU"/>
</dbReference>
<dbReference type="InterPro" id="IPR050065">
    <property type="entry name" value="GlmU-like"/>
</dbReference>
<dbReference type="InterPro" id="IPR038009">
    <property type="entry name" value="GlmU_C_LbH"/>
</dbReference>
<dbReference type="InterPro" id="IPR001451">
    <property type="entry name" value="Hexapep"/>
</dbReference>
<dbReference type="InterPro" id="IPR018357">
    <property type="entry name" value="Hexapep_transf_CS"/>
</dbReference>
<dbReference type="InterPro" id="IPR025877">
    <property type="entry name" value="MobA-like_NTP_Trfase"/>
</dbReference>
<dbReference type="InterPro" id="IPR029044">
    <property type="entry name" value="Nucleotide-diphossugar_trans"/>
</dbReference>
<dbReference type="InterPro" id="IPR011004">
    <property type="entry name" value="Trimer_LpxA-like_sf"/>
</dbReference>
<dbReference type="NCBIfam" id="TIGR01173">
    <property type="entry name" value="glmU"/>
    <property type="match status" value="1"/>
</dbReference>
<dbReference type="NCBIfam" id="NF010933">
    <property type="entry name" value="PRK14353.1"/>
    <property type="match status" value="1"/>
</dbReference>
<dbReference type="PANTHER" id="PTHR43584:SF3">
    <property type="entry name" value="BIFUNCTIONAL PROTEIN GLMU"/>
    <property type="match status" value="1"/>
</dbReference>
<dbReference type="PANTHER" id="PTHR43584">
    <property type="entry name" value="NUCLEOTIDYL TRANSFERASE"/>
    <property type="match status" value="1"/>
</dbReference>
<dbReference type="Pfam" id="PF00132">
    <property type="entry name" value="Hexapep"/>
    <property type="match status" value="2"/>
</dbReference>
<dbReference type="Pfam" id="PF12804">
    <property type="entry name" value="NTP_transf_3"/>
    <property type="match status" value="1"/>
</dbReference>
<dbReference type="SUPFAM" id="SSF53448">
    <property type="entry name" value="Nucleotide-diphospho-sugar transferases"/>
    <property type="match status" value="1"/>
</dbReference>
<dbReference type="SUPFAM" id="SSF51161">
    <property type="entry name" value="Trimeric LpxA-like enzymes"/>
    <property type="match status" value="1"/>
</dbReference>
<dbReference type="PROSITE" id="PS00101">
    <property type="entry name" value="HEXAPEP_TRANSFERASES"/>
    <property type="match status" value="1"/>
</dbReference>
<reference key="1">
    <citation type="submission" date="2007-07" db="EMBL/GenBank/DDBJ databases">
        <title>Complete sequence of chromosome of Xanthobacter autotrophicus Py2.</title>
        <authorList>
            <consortium name="US DOE Joint Genome Institute"/>
            <person name="Copeland A."/>
            <person name="Lucas S."/>
            <person name="Lapidus A."/>
            <person name="Barry K."/>
            <person name="Glavina del Rio T."/>
            <person name="Hammon N."/>
            <person name="Israni S."/>
            <person name="Dalin E."/>
            <person name="Tice H."/>
            <person name="Pitluck S."/>
            <person name="Sims D."/>
            <person name="Brettin T."/>
            <person name="Bruce D."/>
            <person name="Detter J.C."/>
            <person name="Han C."/>
            <person name="Tapia R."/>
            <person name="Brainard J."/>
            <person name="Schmutz J."/>
            <person name="Larimer F."/>
            <person name="Land M."/>
            <person name="Hauser L."/>
            <person name="Kyrpides N."/>
            <person name="Kim E."/>
            <person name="Ensigns S.A."/>
            <person name="Richardson P."/>
        </authorList>
    </citation>
    <scope>NUCLEOTIDE SEQUENCE [LARGE SCALE GENOMIC DNA]</scope>
    <source>
        <strain>ATCC BAA-1158 / Py2</strain>
    </source>
</reference>
<sequence length="448" mass="46230">MSDRSLLVVVLAAGEGTRMASRLPKVLHKVAGRTMLHHVLAATRAAGATRTAVVVGPGREDVAAEVRKIVPDAEVFEQTERLGTAHAVLAARAALENGADDVLVLYADTPLVRPETLGLLRAPLKAGAAVAALGFEPADPTGYGRLVTAGDELVAIREEKDASAAEKAIRFCNAGLMALAGAHALSILERIGNANAKGEYYLTDAVEIARADGLSAVAARADADEVAGVNSRVQLAEAEAILQRRLRLAAMAGGATLVAPETVFLSADTVLGRDVIVEPHVVFGPGVSVGDDVVIHSFCHLEGARLESGVTIGPYARLRPGTQLDSGVRIGNFVETKAAHIESGAKVNHLSYVGDAHVGADANLGAGTITCNYDGFGKYRTEIGAGAFIGVNSALVAPVTVGKGAFVGTGAVITSDVPEDALAIARSRQVVKEGWAKAFRAARSKPKG</sequence>
<comment type="function">
    <text evidence="1">Catalyzes the last two sequential reactions in the de novo biosynthetic pathway for UDP-N-acetylglucosamine (UDP-GlcNAc). The C-terminal domain catalyzes the transfer of acetyl group from acetyl coenzyme A to glucosamine-1-phosphate (GlcN-1-P) to produce N-acetylglucosamine-1-phosphate (GlcNAc-1-P), which is converted into UDP-GlcNAc by the transfer of uridine 5-monophosphate (from uridine 5-triphosphate), a reaction catalyzed by the N-terminal domain.</text>
</comment>
<comment type="catalytic activity">
    <reaction evidence="1">
        <text>alpha-D-glucosamine 1-phosphate + acetyl-CoA = N-acetyl-alpha-D-glucosamine 1-phosphate + CoA + H(+)</text>
        <dbReference type="Rhea" id="RHEA:13725"/>
        <dbReference type="ChEBI" id="CHEBI:15378"/>
        <dbReference type="ChEBI" id="CHEBI:57287"/>
        <dbReference type="ChEBI" id="CHEBI:57288"/>
        <dbReference type="ChEBI" id="CHEBI:57776"/>
        <dbReference type="ChEBI" id="CHEBI:58516"/>
        <dbReference type="EC" id="2.3.1.157"/>
    </reaction>
</comment>
<comment type="catalytic activity">
    <reaction evidence="1">
        <text>N-acetyl-alpha-D-glucosamine 1-phosphate + UTP + H(+) = UDP-N-acetyl-alpha-D-glucosamine + diphosphate</text>
        <dbReference type="Rhea" id="RHEA:13509"/>
        <dbReference type="ChEBI" id="CHEBI:15378"/>
        <dbReference type="ChEBI" id="CHEBI:33019"/>
        <dbReference type="ChEBI" id="CHEBI:46398"/>
        <dbReference type="ChEBI" id="CHEBI:57705"/>
        <dbReference type="ChEBI" id="CHEBI:57776"/>
        <dbReference type="EC" id="2.7.7.23"/>
    </reaction>
</comment>
<comment type="cofactor">
    <cofactor evidence="1">
        <name>Mg(2+)</name>
        <dbReference type="ChEBI" id="CHEBI:18420"/>
    </cofactor>
    <text evidence="1">Binds 1 Mg(2+) ion per subunit.</text>
</comment>
<comment type="pathway">
    <text evidence="1">Nucleotide-sugar biosynthesis; UDP-N-acetyl-alpha-D-glucosamine biosynthesis; N-acetyl-alpha-D-glucosamine 1-phosphate from alpha-D-glucosamine 6-phosphate (route II): step 2/2.</text>
</comment>
<comment type="pathway">
    <text evidence="1">Nucleotide-sugar biosynthesis; UDP-N-acetyl-alpha-D-glucosamine biosynthesis; UDP-N-acetyl-alpha-D-glucosamine from N-acetyl-alpha-D-glucosamine 1-phosphate: step 1/1.</text>
</comment>
<comment type="pathway">
    <text evidence="1">Bacterial outer membrane biogenesis; LPS lipid A biosynthesis.</text>
</comment>
<comment type="subunit">
    <text evidence="1">Homotrimer.</text>
</comment>
<comment type="subcellular location">
    <subcellularLocation>
        <location evidence="1">Cytoplasm</location>
    </subcellularLocation>
</comment>
<comment type="similarity">
    <text evidence="1">In the N-terminal section; belongs to the N-acetylglucosamine-1-phosphate uridyltransferase family.</text>
</comment>
<comment type="similarity">
    <text evidence="1">In the C-terminal section; belongs to the transferase hexapeptide repeat family.</text>
</comment>
<accession>A7INP6</accession>
<keyword id="KW-0012">Acyltransferase</keyword>
<keyword id="KW-0133">Cell shape</keyword>
<keyword id="KW-0961">Cell wall biogenesis/degradation</keyword>
<keyword id="KW-0963">Cytoplasm</keyword>
<keyword id="KW-0460">Magnesium</keyword>
<keyword id="KW-0479">Metal-binding</keyword>
<keyword id="KW-0511">Multifunctional enzyme</keyword>
<keyword id="KW-0548">Nucleotidyltransferase</keyword>
<keyword id="KW-0573">Peptidoglycan synthesis</keyword>
<keyword id="KW-1185">Reference proteome</keyword>
<keyword id="KW-0677">Repeat</keyword>
<keyword id="KW-0808">Transferase</keyword>
<protein>
    <recommendedName>
        <fullName evidence="1">Bifunctional protein GlmU</fullName>
    </recommendedName>
    <domain>
        <recommendedName>
            <fullName evidence="1">UDP-N-acetylglucosamine pyrophosphorylase</fullName>
            <ecNumber evidence="1">2.7.7.23</ecNumber>
        </recommendedName>
        <alternativeName>
            <fullName evidence="1">N-acetylglucosamine-1-phosphate uridyltransferase</fullName>
        </alternativeName>
    </domain>
    <domain>
        <recommendedName>
            <fullName evidence="1">Glucosamine-1-phosphate N-acetyltransferase</fullName>
            <ecNumber evidence="1">2.3.1.157</ecNumber>
        </recommendedName>
    </domain>
</protein>
<feature type="chain" id="PRO_1000186512" description="Bifunctional protein GlmU">
    <location>
        <begin position="1"/>
        <end position="448"/>
    </location>
</feature>
<feature type="region of interest" description="Pyrophosphorylase" evidence="1">
    <location>
        <begin position="1"/>
        <end position="232"/>
    </location>
</feature>
<feature type="region of interest" description="Linker" evidence="1">
    <location>
        <begin position="233"/>
        <end position="253"/>
    </location>
</feature>
<feature type="region of interest" description="N-acetyltransferase" evidence="1">
    <location>
        <begin position="254"/>
        <end position="448"/>
    </location>
</feature>
<feature type="active site" description="Proton acceptor" evidence="1">
    <location>
        <position position="349"/>
    </location>
</feature>
<feature type="binding site" evidence="1">
    <location>
        <begin position="11"/>
        <end position="14"/>
    </location>
    <ligand>
        <name>UDP-N-acetyl-alpha-D-glucosamine</name>
        <dbReference type="ChEBI" id="CHEBI:57705"/>
    </ligand>
</feature>
<feature type="binding site" evidence="1">
    <location>
        <position position="25"/>
    </location>
    <ligand>
        <name>UDP-N-acetyl-alpha-D-glucosamine</name>
        <dbReference type="ChEBI" id="CHEBI:57705"/>
    </ligand>
</feature>
<feature type="binding site" evidence="1">
    <location>
        <position position="78"/>
    </location>
    <ligand>
        <name>UDP-N-acetyl-alpha-D-glucosamine</name>
        <dbReference type="ChEBI" id="CHEBI:57705"/>
    </ligand>
</feature>
<feature type="binding site" evidence="1">
    <location>
        <begin position="83"/>
        <end position="84"/>
    </location>
    <ligand>
        <name>UDP-N-acetyl-alpha-D-glucosamine</name>
        <dbReference type="ChEBI" id="CHEBI:57705"/>
    </ligand>
</feature>
<feature type="binding site" evidence="1">
    <location>
        <position position="108"/>
    </location>
    <ligand>
        <name>Mg(2+)</name>
        <dbReference type="ChEBI" id="CHEBI:18420"/>
    </ligand>
</feature>
<feature type="binding site" evidence="1">
    <location>
        <position position="144"/>
    </location>
    <ligand>
        <name>UDP-N-acetyl-alpha-D-glucosamine</name>
        <dbReference type="ChEBI" id="CHEBI:57705"/>
    </ligand>
</feature>
<feature type="binding site" evidence="1">
    <location>
        <position position="158"/>
    </location>
    <ligand>
        <name>UDP-N-acetyl-alpha-D-glucosamine</name>
        <dbReference type="ChEBI" id="CHEBI:57705"/>
    </ligand>
</feature>
<feature type="binding site" evidence="1">
    <location>
        <position position="173"/>
    </location>
    <ligand>
        <name>UDP-N-acetyl-alpha-D-glucosamine</name>
        <dbReference type="ChEBI" id="CHEBI:57705"/>
    </ligand>
</feature>
<feature type="binding site" evidence="1">
    <location>
        <position position="230"/>
    </location>
    <ligand>
        <name>Mg(2+)</name>
        <dbReference type="ChEBI" id="CHEBI:18420"/>
    </ligand>
</feature>
<feature type="binding site" evidence="1">
    <location>
        <position position="230"/>
    </location>
    <ligand>
        <name>UDP-N-acetyl-alpha-D-glucosamine</name>
        <dbReference type="ChEBI" id="CHEBI:57705"/>
    </ligand>
</feature>
<feature type="binding site" evidence="1">
    <location>
        <position position="319"/>
    </location>
    <ligand>
        <name>UDP-N-acetyl-alpha-D-glucosamine</name>
        <dbReference type="ChEBI" id="CHEBI:57705"/>
    </ligand>
</feature>
<feature type="binding site" evidence="1">
    <location>
        <position position="337"/>
    </location>
    <ligand>
        <name>UDP-N-acetyl-alpha-D-glucosamine</name>
        <dbReference type="ChEBI" id="CHEBI:57705"/>
    </ligand>
</feature>
<feature type="binding site" evidence="1">
    <location>
        <position position="352"/>
    </location>
    <ligand>
        <name>UDP-N-acetyl-alpha-D-glucosamine</name>
        <dbReference type="ChEBI" id="CHEBI:57705"/>
    </ligand>
</feature>
<feature type="binding site" evidence="1">
    <location>
        <position position="363"/>
    </location>
    <ligand>
        <name>UDP-N-acetyl-alpha-D-glucosamine</name>
        <dbReference type="ChEBI" id="CHEBI:57705"/>
    </ligand>
</feature>
<feature type="binding site" evidence="1">
    <location>
        <position position="366"/>
    </location>
    <ligand>
        <name>acetyl-CoA</name>
        <dbReference type="ChEBI" id="CHEBI:57288"/>
    </ligand>
</feature>
<feature type="binding site" evidence="1">
    <location>
        <begin position="372"/>
        <end position="373"/>
    </location>
    <ligand>
        <name>acetyl-CoA</name>
        <dbReference type="ChEBI" id="CHEBI:57288"/>
    </ligand>
</feature>
<feature type="binding site" evidence="1">
    <location>
        <position position="409"/>
    </location>
    <ligand>
        <name>acetyl-CoA</name>
        <dbReference type="ChEBI" id="CHEBI:57288"/>
    </ligand>
</feature>
<feature type="binding site" evidence="1">
    <location>
        <position position="426"/>
    </location>
    <ligand>
        <name>acetyl-CoA</name>
        <dbReference type="ChEBI" id="CHEBI:57288"/>
    </ligand>
</feature>
<gene>
    <name evidence="1" type="primary">glmU</name>
    <name type="ordered locus">Xaut_4419</name>
</gene>
<evidence type="ECO:0000255" key="1">
    <source>
        <dbReference type="HAMAP-Rule" id="MF_01631"/>
    </source>
</evidence>
<name>GLMU_XANP2</name>
<organism>
    <name type="scientific">Xanthobacter autotrophicus (strain ATCC BAA-1158 / Py2)</name>
    <dbReference type="NCBI Taxonomy" id="78245"/>
    <lineage>
        <taxon>Bacteria</taxon>
        <taxon>Pseudomonadati</taxon>
        <taxon>Pseudomonadota</taxon>
        <taxon>Alphaproteobacteria</taxon>
        <taxon>Hyphomicrobiales</taxon>
        <taxon>Xanthobacteraceae</taxon>
        <taxon>Xanthobacter</taxon>
    </lineage>
</organism>
<proteinExistence type="inferred from homology"/>